<evidence type="ECO:0000250" key="1"/>
<evidence type="ECO:0000256" key="2">
    <source>
        <dbReference type="SAM" id="MobiDB-lite"/>
    </source>
</evidence>
<evidence type="ECO:0000305" key="3"/>
<protein>
    <recommendedName>
        <fullName>Suppressor of hairless homolog</fullName>
    </recommendedName>
    <alternativeName>
        <fullName>RBP-Jkappa</fullName>
    </alternativeName>
</protein>
<sequence>MYHLNVTPDKQTSPHGCLVVSETDQQRSHVKERVNGTPNQNGGTSTSSKPRSVFENRPPQRLTREAMSKYLRERNDQTLIILHAKVAQKSYGNEKRFLCPPPCLYLMESGWKQKQQILEEADQAPEAGQVHAFIGIGSSDQEMQQLNLDGKNFCTAKTLYISDTDKRKHFMLCVKMFFGSGLEVGAFNSRRIKVISKPSKKKQSLKNADLCIASGTKVALFNRLRSQTVSTRYLHVENGNFHASSIQWGSFAIHLLDDDESESEEFTVRDGYIHYGQTVKLVCSTTGMALPRLIIRKVDKQTAILNADDPVSQLHKCAFYLKDSERMYLCLSQERIIQFQATPCPKEPNKEMINDGASWTIISTDKAEYTFCDGMGPTSKPVTPVPVVHSLQLNGGGDVAMLEVNGENFSPQLKVWFGEVEADTMYRCEEGLLCVVPDISEFREGWTWVKQSVQVPINLVRHDGIIYPTNLTFTFTPEPGPRPTLARLLYISSTPRDRIMPDRVPGRGVLIRPTWTTT</sequence>
<gene>
    <name type="primary">RBP-JK</name>
</gene>
<keyword id="KW-0010">Activator</keyword>
<keyword id="KW-0217">Developmental protein</keyword>
<keyword id="KW-0238">DNA-binding</keyword>
<keyword id="KW-0914">Notch signaling pathway</keyword>
<keyword id="KW-0539">Nucleus</keyword>
<keyword id="KW-0677">Repeat</keyword>
<keyword id="KW-0678">Repressor</keyword>
<keyword id="KW-0804">Transcription</keyword>
<keyword id="KW-0805">Transcription regulation</keyword>
<comment type="function">
    <text evidence="1">Transcriptional regulator that plays a central role in Notch signaling, a signaling pathway involved in cell-cell communication that regulates a broad spectrum of cell-fate determinations. Acts as a transcriptional repressor when it is not associated with Notch proteins. When associated with some Notch protein, it acts as a transcriptional activator that activates transcription of Notch target genes (By similarity).</text>
</comment>
<comment type="subunit">
    <text evidence="1">Interacts with activated Notch proteins.</text>
</comment>
<comment type="subcellular location">
    <subcellularLocation>
        <location evidence="3">Nucleus</location>
    </subcellularLocation>
</comment>
<comment type="similarity">
    <text evidence="3">Belongs to the Su(H) family.</text>
</comment>
<dbReference type="EMBL" id="AB003695">
    <property type="protein sequence ID" value="BAA20141.1"/>
    <property type="molecule type" value="mRNA"/>
</dbReference>
<dbReference type="SMR" id="O02019"/>
<dbReference type="GO" id="GO:0005634">
    <property type="term" value="C:nucleus"/>
    <property type="evidence" value="ECO:0007669"/>
    <property type="project" value="UniProtKB-SubCell"/>
</dbReference>
<dbReference type="GO" id="GO:0001228">
    <property type="term" value="F:DNA-binding transcription activator activity, RNA polymerase II-specific"/>
    <property type="evidence" value="ECO:0007669"/>
    <property type="project" value="InterPro"/>
</dbReference>
<dbReference type="GO" id="GO:0000978">
    <property type="term" value="F:RNA polymerase II cis-regulatory region sequence-specific DNA binding"/>
    <property type="evidence" value="ECO:0007669"/>
    <property type="project" value="InterPro"/>
</dbReference>
<dbReference type="GO" id="GO:0007219">
    <property type="term" value="P:Notch signaling pathway"/>
    <property type="evidence" value="ECO:0007669"/>
    <property type="project" value="UniProtKB-KW"/>
</dbReference>
<dbReference type="CDD" id="cd01176">
    <property type="entry name" value="IPT_RBP-Jkappa"/>
    <property type="match status" value="1"/>
</dbReference>
<dbReference type="FunFam" id="2.60.40.1450:FF:000001">
    <property type="entry name" value="Recombining binding protein suppressor of hairless"/>
    <property type="match status" value="1"/>
</dbReference>
<dbReference type="FunFam" id="2.80.10.50:FF:000003">
    <property type="entry name" value="recombining binding protein suppressor of hairless"/>
    <property type="match status" value="1"/>
</dbReference>
<dbReference type="FunFam" id="2.60.40.10:FF:000074">
    <property type="entry name" value="Recombining binding protein suppressor of hairless, putative"/>
    <property type="match status" value="1"/>
</dbReference>
<dbReference type="Gene3D" id="2.80.10.50">
    <property type="match status" value="1"/>
</dbReference>
<dbReference type="Gene3D" id="2.60.40.10">
    <property type="entry name" value="Immunoglobulins"/>
    <property type="match status" value="1"/>
</dbReference>
<dbReference type="Gene3D" id="2.60.40.1450">
    <property type="entry name" value="LAG1, DNA binding domain"/>
    <property type="match status" value="1"/>
</dbReference>
<dbReference type="InterPro" id="IPR015350">
    <property type="entry name" value="Beta-trefoil_DNA-bd_dom"/>
</dbReference>
<dbReference type="InterPro" id="IPR036358">
    <property type="entry name" value="BTD_sf"/>
</dbReference>
<dbReference type="InterPro" id="IPR040159">
    <property type="entry name" value="CLS_fam"/>
</dbReference>
<dbReference type="InterPro" id="IPR013783">
    <property type="entry name" value="Ig-like_fold"/>
</dbReference>
<dbReference type="InterPro" id="IPR014756">
    <property type="entry name" value="Ig_E-set"/>
</dbReference>
<dbReference type="InterPro" id="IPR008967">
    <property type="entry name" value="p53-like_TF_DNA-bd_sf"/>
</dbReference>
<dbReference type="InterPro" id="IPR015351">
    <property type="entry name" value="RBP-J/Cbf11/Cbf12_DNA-bd"/>
</dbReference>
<dbReference type="InterPro" id="IPR037095">
    <property type="entry name" value="RBP-J/Cbf11_DNA-bd_sf"/>
</dbReference>
<dbReference type="InterPro" id="IPR038007">
    <property type="entry name" value="RBP-Jkappa_IPT"/>
</dbReference>
<dbReference type="PANTHER" id="PTHR10665">
    <property type="entry name" value="RECOMBINING BINDING PROTEIN SUPPRESSOR OF HAIRLESS"/>
    <property type="match status" value="1"/>
</dbReference>
<dbReference type="Pfam" id="PF09270">
    <property type="entry name" value="BTD"/>
    <property type="match status" value="1"/>
</dbReference>
<dbReference type="Pfam" id="PF09271">
    <property type="entry name" value="LAG1-DNAbind"/>
    <property type="match status" value="1"/>
</dbReference>
<dbReference type="Pfam" id="PF20144">
    <property type="entry name" value="TIG_SUH"/>
    <property type="match status" value="1"/>
</dbReference>
<dbReference type="SMART" id="SM01268">
    <property type="entry name" value="BTD"/>
    <property type="match status" value="1"/>
</dbReference>
<dbReference type="SMART" id="SM01267">
    <property type="entry name" value="LAG1_DNAbind"/>
    <property type="match status" value="1"/>
</dbReference>
<dbReference type="SUPFAM" id="SSF110217">
    <property type="entry name" value="DNA-binding protein LAG-1 (CSL)"/>
    <property type="match status" value="1"/>
</dbReference>
<dbReference type="SUPFAM" id="SSF81296">
    <property type="entry name" value="E set domains"/>
    <property type="match status" value="1"/>
</dbReference>
<dbReference type="SUPFAM" id="SSF49417">
    <property type="entry name" value="p53-like transcription factors"/>
    <property type="match status" value="1"/>
</dbReference>
<organism>
    <name type="scientific">Halocynthia roretzi</name>
    <name type="common">Sea squirt</name>
    <name type="synonym">Cynthia roretzi</name>
    <dbReference type="NCBI Taxonomy" id="7729"/>
    <lineage>
        <taxon>Eukaryota</taxon>
        <taxon>Metazoa</taxon>
        <taxon>Chordata</taxon>
        <taxon>Tunicata</taxon>
        <taxon>Ascidiacea</taxon>
        <taxon>Stolidobranchia</taxon>
        <taxon>Pyuridae</taxon>
        <taxon>Halocynthia</taxon>
    </lineage>
</organism>
<name>SUH_HALRO</name>
<feature type="chain" id="PRO_0000208575" description="Suppressor of hairless homolog">
    <location>
        <begin position="1"/>
        <end position="518"/>
    </location>
</feature>
<feature type="domain" description="IPT/TIG">
    <location>
        <begin position="386"/>
        <end position="476"/>
    </location>
</feature>
<feature type="DNA-binding region" evidence="1">
    <location>
        <begin position="89"/>
        <end position="96"/>
    </location>
</feature>
<feature type="DNA-binding region" evidence="1">
    <location>
        <begin position="223"/>
        <end position="232"/>
    </location>
</feature>
<feature type="DNA-binding region" evidence="1">
    <location>
        <begin position="296"/>
        <end position="328"/>
    </location>
</feature>
<feature type="region of interest" description="Disordered" evidence="2">
    <location>
        <begin position="22"/>
        <end position="59"/>
    </location>
</feature>
<feature type="compositionally biased region" description="Basic and acidic residues" evidence="2">
    <location>
        <begin position="24"/>
        <end position="34"/>
    </location>
</feature>
<feature type="compositionally biased region" description="Polar residues" evidence="2">
    <location>
        <begin position="36"/>
        <end position="50"/>
    </location>
</feature>
<reference key="1">
    <citation type="submission" date="1997-05" db="EMBL/GenBank/DDBJ databases">
        <title>Structural and functional conservation of Halocynthia roretzi RBP-Jkappa.</title>
        <authorList>
            <person name="Shimokawa S."/>
            <person name="Kawaichi M."/>
        </authorList>
    </citation>
    <scope>NUCLEOTIDE SEQUENCE [MRNA]</scope>
</reference>
<accession>O02019</accession>
<proteinExistence type="evidence at transcript level"/>